<organism>
    <name type="scientific">Bacillus subtilis (strain 168)</name>
    <dbReference type="NCBI Taxonomy" id="224308"/>
    <lineage>
        <taxon>Bacteria</taxon>
        <taxon>Bacillati</taxon>
        <taxon>Bacillota</taxon>
        <taxon>Bacilli</taxon>
        <taxon>Bacillales</taxon>
        <taxon>Bacillaceae</taxon>
        <taxon>Bacillus</taxon>
    </lineage>
</organism>
<feature type="chain" id="PRO_0000360820" description="Formyltetrahydrofolate deformylase">
    <location>
        <begin position="1"/>
        <end position="300"/>
    </location>
</feature>
<feature type="domain" description="ACT" evidence="1">
    <location>
        <begin position="21"/>
        <end position="102"/>
    </location>
</feature>
<feature type="active site" evidence="1">
    <location>
        <position position="244"/>
    </location>
</feature>
<feature type="sequence conflict" description="In Ref. 1; CAA05590." evidence="2" ref="1">
    <original>E</original>
    <variation>N</variation>
    <location>
        <position position="113"/>
    </location>
</feature>
<feature type="sequence conflict" description="In Ref. 1; CAA05590." evidence="2" ref="1">
    <original>E</original>
    <variation>K</variation>
    <location>
        <position position="254"/>
    </location>
</feature>
<feature type="sequence conflict" description="In Ref. 1; CAA05590." evidence="2" ref="1">
    <original>A</original>
    <variation>T</variation>
    <location>
        <position position="264"/>
    </location>
</feature>
<comment type="function">
    <text evidence="1">Catalyzes the hydrolysis of 10-formyltetrahydrofolate (formyl-FH4) to formate and tetrahydrofolate (FH4).</text>
</comment>
<comment type="catalytic activity">
    <reaction evidence="1">
        <text>(6R)-10-formyltetrahydrofolate + H2O = (6S)-5,6,7,8-tetrahydrofolate + formate + H(+)</text>
        <dbReference type="Rhea" id="RHEA:19833"/>
        <dbReference type="ChEBI" id="CHEBI:15377"/>
        <dbReference type="ChEBI" id="CHEBI:15378"/>
        <dbReference type="ChEBI" id="CHEBI:15740"/>
        <dbReference type="ChEBI" id="CHEBI:57453"/>
        <dbReference type="ChEBI" id="CHEBI:195366"/>
        <dbReference type="EC" id="3.5.1.10"/>
    </reaction>
</comment>
<comment type="pathway">
    <text evidence="1">Purine metabolism; IMP biosynthesis via de novo pathway; formate from 10-formyl-5,6,7,8-tetrahydrofolate: step 1/1.</text>
</comment>
<comment type="similarity">
    <text evidence="1">Belongs to the PurU family.</text>
</comment>
<proteinExistence type="inferred from homology"/>
<protein>
    <recommendedName>
        <fullName evidence="1">Formyltetrahydrofolate deformylase</fullName>
        <ecNumber evidence="1">3.5.1.10</ecNumber>
    </recommendedName>
    <alternativeName>
        <fullName evidence="1">Formyl-FH(4) hydrolase</fullName>
    </alternativeName>
</protein>
<reference key="1">
    <citation type="submission" date="1997-11" db="EMBL/GenBank/DDBJ databases">
        <title>Sequence of the Bacillus subtilis genome between xlyA and ykoR.</title>
        <authorList>
            <person name="Devine K.M."/>
        </authorList>
    </citation>
    <scope>NUCLEOTIDE SEQUENCE [GENOMIC DNA]</scope>
    <source>
        <strain>168</strain>
    </source>
</reference>
<reference key="2">
    <citation type="journal article" date="1997" name="Nature">
        <title>The complete genome sequence of the Gram-positive bacterium Bacillus subtilis.</title>
        <authorList>
            <person name="Kunst F."/>
            <person name="Ogasawara N."/>
            <person name="Moszer I."/>
            <person name="Albertini A.M."/>
            <person name="Alloni G."/>
            <person name="Azevedo V."/>
            <person name="Bertero M.G."/>
            <person name="Bessieres P."/>
            <person name="Bolotin A."/>
            <person name="Borchert S."/>
            <person name="Borriss R."/>
            <person name="Boursier L."/>
            <person name="Brans A."/>
            <person name="Braun M."/>
            <person name="Brignell S.C."/>
            <person name="Bron S."/>
            <person name="Brouillet S."/>
            <person name="Bruschi C.V."/>
            <person name="Caldwell B."/>
            <person name="Capuano V."/>
            <person name="Carter N.M."/>
            <person name="Choi S.-K."/>
            <person name="Codani J.-J."/>
            <person name="Connerton I.F."/>
            <person name="Cummings N.J."/>
            <person name="Daniel R.A."/>
            <person name="Denizot F."/>
            <person name="Devine K.M."/>
            <person name="Duesterhoeft A."/>
            <person name="Ehrlich S.D."/>
            <person name="Emmerson P.T."/>
            <person name="Entian K.-D."/>
            <person name="Errington J."/>
            <person name="Fabret C."/>
            <person name="Ferrari E."/>
            <person name="Foulger D."/>
            <person name="Fritz C."/>
            <person name="Fujita M."/>
            <person name="Fujita Y."/>
            <person name="Fuma S."/>
            <person name="Galizzi A."/>
            <person name="Galleron N."/>
            <person name="Ghim S.-Y."/>
            <person name="Glaser P."/>
            <person name="Goffeau A."/>
            <person name="Golightly E.J."/>
            <person name="Grandi G."/>
            <person name="Guiseppi G."/>
            <person name="Guy B.J."/>
            <person name="Haga K."/>
            <person name="Haiech J."/>
            <person name="Harwood C.R."/>
            <person name="Henaut A."/>
            <person name="Hilbert H."/>
            <person name="Holsappel S."/>
            <person name="Hosono S."/>
            <person name="Hullo M.-F."/>
            <person name="Itaya M."/>
            <person name="Jones L.-M."/>
            <person name="Joris B."/>
            <person name="Karamata D."/>
            <person name="Kasahara Y."/>
            <person name="Klaerr-Blanchard M."/>
            <person name="Klein C."/>
            <person name="Kobayashi Y."/>
            <person name="Koetter P."/>
            <person name="Koningstein G."/>
            <person name="Krogh S."/>
            <person name="Kumano M."/>
            <person name="Kurita K."/>
            <person name="Lapidus A."/>
            <person name="Lardinois S."/>
            <person name="Lauber J."/>
            <person name="Lazarevic V."/>
            <person name="Lee S.-M."/>
            <person name="Levine A."/>
            <person name="Liu H."/>
            <person name="Masuda S."/>
            <person name="Mauel C."/>
            <person name="Medigue C."/>
            <person name="Medina N."/>
            <person name="Mellado R.P."/>
            <person name="Mizuno M."/>
            <person name="Moestl D."/>
            <person name="Nakai S."/>
            <person name="Noback M."/>
            <person name="Noone D."/>
            <person name="O'Reilly M."/>
            <person name="Ogawa K."/>
            <person name="Ogiwara A."/>
            <person name="Oudega B."/>
            <person name="Park S.-H."/>
            <person name="Parro V."/>
            <person name="Pohl T.M."/>
            <person name="Portetelle D."/>
            <person name="Porwollik S."/>
            <person name="Prescott A.M."/>
            <person name="Presecan E."/>
            <person name="Pujic P."/>
            <person name="Purnelle B."/>
            <person name="Rapoport G."/>
            <person name="Rey M."/>
            <person name="Reynolds S."/>
            <person name="Rieger M."/>
            <person name="Rivolta C."/>
            <person name="Rocha E."/>
            <person name="Roche B."/>
            <person name="Rose M."/>
            <person name="Sadaie Y."/>
            <person name="Sato T."/>
            <person name="Scanlan E."/>
            <person name="Schleich S."/>
            <person name="Schroeter R."/>
            <person name="Scoffone F."/>
            <person name="Sekiguchi J."/>
            <person name="Sekowska A."/>
            <person name="Seror S.J."/>
            <person name="Serror P."/>
            <person name="Shin B.-S."/>
            <person name="Soldo B."/>
            <person name="Sorokin A."/>
            <person name="Tacconi E."/>
            <person name="Takagi T."/>
            <person name="Takahashi H."/>
            <person name="Takemaru K."/>
            <person name="Takeuchi M."/>
            <person name="Tamakoshi A."/>
            <person name="Tanaka T."/>
            <person name="Terpstra P."/>
            <person name="Tognoni A."/>
            <person name="Tosato V."/>
            <person name="Uchiyama S."/>
            <person name="Vandenbol M."/>
            <person name="Vannier F."/>
            <person name="Vassarotti A."/>
            <person name="Viari A."/>
            <person name="Wambutt R."/>
            <person name="Wedler E."/>
            <person name="Wedler H."/>
            <person name="Weitzenegger T."/>
            <person name="Winters P."/>
            <person name="Wipat A."/>
            <person name="Yamamoto H."/>
            <person name="Yamane K."/>
            <person name="Yasumoto K."/>
            <person name="Yata K."/>
            <person name="Yoshida K."/>
            <person name="Yoshikawa H.-F."/>
            <person name="Zumstein E."/>
            <person name="Yoshikawa H."/>
            <person name="Danchin A."/>
        </authorList>
    </citation>
    <scope>NUCLEOTIDE SEQUENCE [LARGE SCALE GENOMIC DNA]</scope>
    <source>
        <strain>168</strain>
    </source>
</reference>
<reference key="3">
    <citation type="journal article" date="2009" name="Microbiology">
        <title>From a consortium sequence to a unified sequence: the Bacillus subtilis 168 reference genome a decade later.</title>
        <authorList>
            <person name="Barbe V."/>
            <person name="Cruveiller S."/>
            <person name="Kunst F."/>
            <person name="Lenoble P."/>
            <person name="Meurice G."/>
            <person name="Sekowska A."/>
            <person name="Vallenet D."/>
            <person name="Wang T."/>
            <person name="Moszer I."/>
            <person name="Medigue C."/>
            <person name="Danchin A."/>
        </authorList>
    </citation>
    <scope>SEQUENCE REVISION TO 113; 254 AND 264</scope>
</reference>
<accession>O34990</accession>
<accession>Q796M2</accession>
<sequence length="300" mass="34477">MKSYMTQRLDEYRDGNEDKGRLLVSCPDQPGIVSAVSAFLFEHGANIIESNQYTTDPEGGRFFLRIEFDCAGIREKKSSLQAAFASVAEKFDMTWSLTLASELKRVAIFVSKELHCLHELIWEWQTGNLMAEIAVVISNHEEARELVERLNIPFHYMKANKDIRAEVEKKQLELLEQYDVDVIVLARYMQILTPDFVSAHPNRIINIHHSFLPAFIGANPYKRAYERGVKLIGATSHYVTNDLDEGPIIEQDIERVDHRDNAEALKNIGRTIERSVLARAVKWHLEDRVIVHENKTIVFN</sequence>
<gene>
    <name evidence="1" type="primary">purU</name>
    <name type="synonym">ykkE</name>
    <name type="ordered locus">BSU13110</name>
</gene>
<name>PURU_BACSU</name>
<evidence type="ECO:0000255" key="1">
    <source>
        <dbReference type="HAMAP-Rule" id="MF_01927"/>
    </source>
</evidence>
<evidence type="ECO:0000305" key="2"/>
<dbReference type="EC" id="3.5.1.10" evidence="1"/>
<dbReference type="EMBL" id="AJ002571">
    <property type="protein sequence ID" value="CAA05590.1"/>
    <property type="molecule type" value="Genomic_DNA"/>
</dbReference>
<dbReference type="EMBL" id="AL009126">
    <property type="protein sequence ID" value="CAB13168.2"/>
    <property type="molecule type" value="Genomic_DNA"/>
</dbReference>
<dbReference type="PIR" id="C69857">
    <property type="entry name" value="C69857"/>
</dbReference>
<dbReference type="RefSeq" id="NP_389194.2">
    <property type="nucleotide sequence ID" value="NC_000964.3"/>
</dbReference>
<dbReference type="RefSeq" id="WP_003245802.1">
    <property type="nucleotide sequence ID" value="NZ_OZ025638.1"/>
</dbReference>
<dbReference type="SMR" id="O34990"/>
<dbReference type="FunCoup" id="O34990">
    <property type="interactions" value="553"/>
</dbReference>
<dbReference type="STRING" id="224308.BSU13110"/>
<dbReference type="PaxDb" id="224308-BSU13110"/>
<dbReference type="EnsemblBacteria" id="CAB13168">
    <property type="protein sequence ID" value="CAB13168"/>
    <property type="gene ID" value="BSU_13110"/>
</dbReference>
<dbReference type="GeneID" id="939854"/>
<dbReference type="KEGG" id="bsu:BSU13110"/>
<dbReference type="PATRIC" id="fig|224308.179.peg.1423"/>
<dbReference type="eggNOG" id="COG0788">
    <property type="taxonomic scope" value="Bacteria"/>
</dbReference>
<dbReference type="InParanoid" id="O34990"/>
<dbReference type="OrthoDB" id="9806170at2"/>
<dbReference type="PhylomeDB" id="O34990"/>
<dbReference type="BioCyc" id="BSUB:BSU13110-MONOMER"/>
<dbReference type="UniPathway" id="UPA00074">
    <property type="reaction ID" value="UER00170"/>
</dbReference>
<dbReference type="Proteomes" id="UP000001570">
    <property type="component" value="Chromosome"/>
</dbReference>
<dbReference type="GO" id="GO:0008864">
    <property type="term" value="F:formyltetrahydrofolate deformylase activity"/>
    <property type="evidence" value="ECO:0007669"/>
    <property type="project" value="UniProtKB-UniRule"/>
</dbReference>
<dbReference type="GO" id="GO:0006189">
    <property type="term" value="P:'de novo' IMP biosynthetic process"/>
    <property type="evidence" value="ECO:0007669"/>
    <property type="project" value="UniProtKB-UniRule"/>
</dbReference>
<dbReference type="GO" id="GO:0006730">
    <property type="term" value="P:one-carbon metabolic process"/>
    <property type="evidence" value="ECO:0007669"/>
    <property type="project" value="UniProtKB-KW"/>
</dbReference>
<dbReference type="CDD" id="cd04875">
    <property type="entry name" value="ACT_F4HF-DF"/>
    <property type="match status" value="1"/>
</dbReference>
<dbReference type="CDD" id="cd08648">
    <property type="entry name" value="FMT_core_Formyl-FH4-Hydrolase_C"/>
    <property type="match status" value="1"/>
</dbReference>
<dbReference type="Gene3D" id="3.30.70.260">
    <property type="match status" value="1"/>
</dbReference>
<dbReference type="Gene3D" id="3.40.50.170">
    <property type="entry name" value="Formyl transferase, N-terminal domain"/>
    <property type="match status" value="1"/>
</dbReference>
<dbReference type="HAMAP" id="MF_01927">
    <property type="entry name" value="PurU"/>
    <property type="match status" value="1"/>
</dbReference>
<dbReference type="InterPro" id="IPR045865">
    <property type="entry name" value="ACT-like_dom_sf"/>
</dbReference>
<dbReference type="InterPro" id="IPR002912">
    <property type="entry name" value="ACT_dom"/>
</dbReference>
<dbReference type="InterPro" id="IPR041729">
    <property type="entry name" value="Formyl-FH4-Hydrolase_C"/>
</dbReference>
<dbReference type="InterPro" id="IPR002376">
    <property type="entry name" value="Formyl_transf_N"/>
</dbReference>
<dbReference type="InterPro" id="IPR036477">
    <property type="entry name" value="Formyl_transf_N_sf"/>
</dbReference>
<dbReference type="InterPro" id="IPR004810">
    <property type="entry name" value="PurU"/>
</dbReference>
<dbReference type="InterPro" id="IPR044074">
    <property type="entry name" value="PurU_ACT"/>
</dbReference>
<dbReference type="NCBIfam" id="NF004684">
    <property type="entry name" value="PRK06027.1"/>
    <property type="match status" value="1"/>
</dbReference>
<dbReference type="NCBIfam" id="TIGR00655">
    <property type="entry name" value="PurU"/>
    <property type="match status" value="1"/>
</dbReference>
<dbReference type="PANTHER" id="PTHR42706">
    <property type="entry name" value="FORMYLTETRAHYDROFOLATE DEFORMYLASE"/>
    <property type="match status" value="1"/>
</dbReference>
<dbReference type="PANTHER" id="PTHR42706:SF1">
    <property type="entry name" value="FORMYLTETRAHYDROFOLATE DEFORMYLASE 2, MITOCHONDRIAL"/>
    <property type="match status" value="1"/>
</dbReference>
<dbReference type="Pfam" id="PF01842">
    <property type="entry name" value="ACT"/>
    <property type="match status" value="1"/>
</dbReference>
<dbReference type="Pfam" id="PF00551">
    <property type="entry name" value="Formyl_trans_N"/>
    <property type="match status" value="1"/>
</dbReference>
<dbReference type="PIRSF" id="PIRSF036480">
    <property type="entry name" value="FormyFH4_hydr"/>
    <property type="match status" value="1"/>
</dbReference>
<dbReference type="PRINTS" id="PR01575">
    <property type="entry name" value="FFH4HYDRLASE"/>
</dbReference>
<dbReference type="SUPFAM" id="SSF55021">
    <property type="entry name" value="ACT-like"/>
    <property type="match status" value="1"/>
</dbReference>
<dbReference type="SUPFAM" id="SSF53328">
    <property type="entry name" value="Formyltransferase"/>
    <property type="match status" value="1"/>
</dbReference>
<dbReference type="PROSITE" id="PS51671">
    <property type="entry name" value="ACT"/>
    <property type="match status" value="1"/>
</dbReference>
<keyword id="KW-0378">Hydrolase</keyword>
<keyword id="KW-0554">One-carbon metabolism</keyword>
<keyword id="KW-0658">Purine biosynthesis</keyword>
<keyword id="KW-1185">Reference proteome</keyword>